<dbReference type="EMBL" id="AF440760">
    <property type="protein sequence ID" value="AAL33643.1"/>
    <property type="status" value="ALT_INIT"/>
    <property type="molecule type" value="Genomic_DNA"/>
</dbReference>
<dbReference type="RefSeq" id="WP_001518146.1">
    <property type="nucleotide sequence ID" value="NZ_LHTF01000001.1"/>
</dbReference>
<dbReference type="SMR" id="P59993"/>
<dbReference type="PATRIC" id="fig|605.10.peg.1628"/>
<dbReference type="GO" id="GO:0005737">
    <property type="term" value="C:cytoplasm"/>
    <property type="evidence" value="ECO:0007669"/>
    <property type="project" value="UniProtKB-SubCell"/>
</dbReference>
<dbReference type="GO" id="GO:0003677">
    <property type="term" value="F:DNA binding"/>
    <property type="evidence" value="ECO:0007669"/>
    <property type="project" value="UniProtKB-UniRule"/>
</dbReference>
<dbReference type="GO" id="GO:0044780">
    <property type="term" value="P:bacterial-type flagellum assembly"/>
    <property type="evidence" value="ECO:0007669"/>
    <property type="project" value="InterPro"/>
</dbReference>
<dbReference type="GO" id="GO:0045893">
    <property type="term" value="P:positive regulation of DNA-templated transcription"/>
    <property type="evidence" value="ECO:0007669"/>
    <property type="project" value="InterPro"/>
</dbReference>
<dbReference type="GO" id="GO:1902208">
    <property type="term" value="P:regulation of bacterial-type flagellum assembly"/>
    <property type="evidence" value="ECO:0007669"/>
    <property type="project" value="UniProtKB-UniRule"/>
</dbReference>
<dbReference type="Gene3D" id="1.10.4000.10">
    <property type="entry name" value="Flagellar transcriptional activator FlhD"/>
    <property type="match status" value="1"/>
</dbReference>
<dbReference type="HAMAP" id="MF_00725">
    <property type="entry name" value="FlhD"/>
    <property type="match status" value="1"/>
</dbReference>
<dbReference type="InterPro" id="IPR023559">
    <property type="entry name" value="Flagellar_FlhD"/>
</dbReference>
<dbReference type="InterPro" id="IPR036194">
    <property type="entry name" value="FlhD_sf"/>
</dbReference>
<dbReference type="NCBIfam" id="NF002783">
    <property type="entry name" value="PRK02909.1-1"/>
    <property type="match status" value="1"/>
</dbReference>
<dbReference type="Pfam" id="PF05247">
    <property type="entry name" value="FlhD"/>
    <property type="match status" value="1"/>
</dbReference>
<dbReference type="SUPFAM" id="SSF63592">
    <property type="entry name" value="Flagellar transcriptional activator FlhD"/>
    <property type="match status" value="1"/>
</dbReference>
<gene>
    <name evidence="1" type="primary">flhD</name>
</gene>
<organism>
    <name type="scientific">Salmonella pullorum</name>
    <dbReference type="NCBI Taxonomy" id="605"/>
    <lineage>
        <taxon>Bacteria</taxon>
        <taxon>Pseudomonadati</taxon>
        <taxon>Pseudomonadota</taxon>
        <taxon>Gammaproteobacteria</taxon>
        <taxon>Enterobacterales</taxon>
        <taxon>Enterobacteriaceae</taxon>
        <taxon>Salmonella</taxon>
    </lineage>
</organism>
<accession>P59993</accession>
<sequence length="113" mass="13006">MHTSELLKHIYDINLSYLLLAQRLIVQDKASAMFRLGINEEMANTLGALTLPQMVKLAETNQLVCHFRFDDHQTITRLTQDSRVDDLQQIHTGIMLSTRLLNEVDDTARKKRA</sequence>
<keyword id="KW-0010">Activator</keyword>
<keyword id="KW-1005">Bacterial flagellum biogenesis</keyword>
<keyword id="KW-0963">Cytoplasm</keyword>
<keyword id="KW-1015">Disulfide bond</keyword>
<keyword id="KW-0238">DNA-binding</keyword>
<keyword id="KW-0804">Transcription</keyword>
<keyword id="KW-0805">Transcription regulation</keyword>
<name>FLHD_SALPU</name>
<protein>
    <recommendedName>
        <fullName evidence="1">Flagellar transcriptional regulator FlhD</fullName>
    </recommendedName>
</protein>
<feature type="chain" id="PRO_0000182723" description="Flagellar transcriptional regulator FlhD">
    <location>
        <begin position="1"/>
        <end position="113"/>
    </location>
</feature>
<feature type="disulfide bond" description="Interchain" evidence="1">
    <location>
        <position position="65"/>
    </location>
</feature>
<reference key="1">
    <citation type="submission" date="2001-10" db="EMBL/GenBank/DDBJ databases">
        <title>Characterization of FlhDC from non-motile Salmonella pullorum.</title>
        <authorList>
            <person name="Guard-Petter J."/>
        </authorList>
    </citation>
    <scope>NUCLEOTIDE SEQUENCE [GENOMIC DNA]</scope>
</reference>
<comment type="function">
    <text evidence="1">Functions in complex with FlhC as a master transcriptional regulator that regulates transcription of several flagellar and non-flagellar operons by binding to their promoter region. Activates expression of class 2 flagellar genes, including fliA, which is a flagellum-specific sigma factor that turns on the class 3 genes. Also regulates genes whose products function in a variety of physiological pathways.</text>
</comment>
<comment type="subunit">
    <text evidence="1">Homodimer; disulfide-linked. Forms a heterohexamer composed of two FlhC and four FlhD subunits. Each FlhC binds a FlhD dimer, forming a heterotrimer, and a hexamer assembles by dimerization of two heterotrimers.</text>
</comment>
<comment type="subcellular location">
    <subcellularLocation>
        <location evidence="1">Cytoplasm</location>
    </subcellularLocation>
</comment>
<comment type="domain">
    <text evidence="1">The C-terminal region contains a putative helix-turn-helix (HTH) motif, suggesting that this region may bind DNA.</text>
</comment>
<comment type="similarity">
    <text evidence="1">Belongs to the FlhD family.</text>
</comment>
<comment type="sequence caution" evidence="2">
    <conflict type="erroneous initiation">
        <sequence resource="EMBL-CDS" id="AAL33643"/>
    </conflict>
    <text>Extended N-terminus.</text>
</comment>
<evidence type="ECO:0000255" key="1">
    <source>
        <dbReference type="HAMAP-Rule" id="MF_00725"/>
    </source>
</evidence>
<evidence type="ECO:0000305" key="2"/>
<proteinExistence type="inferred from homology"/>